<keyword id="KW-0113">Calvin cycle</keyword>
<keyword id="KW-0120">Carbon dioxide fixation</keyword>
<keyword id="KW-0150">Chloroplast</keyword>
<keyword id="KW-1015">Disulfide bond</keyword>
<keyword id="KW-0456">Lyase</keyword>
<keyword id="KW-0460">Magnesium</keyword>
<keyword id="KW-0479">Metal-binding</keyword>
<keyword id="KW-0503">Monooxygenase</keyword>
<keyword id="KW-0560">Oxidoreductase</keyword>
<keyword id="KW-0601">Photorespiration</keyword>
<keyword id="KW-0602">Photosynthesis</keyword>
<keyword id="KW-0934">Plastid</keyword>
<reference key="1">
    <citation type="journal article" date="1991" name="Genetics">
        <title>Molecular analysis of the hot spot region related to length mutations in wheat chloroplast DNAs. I. Nucleotide divergence of genes and intergenic spacer regions located in the hot spot region.</title>
        <authorList>
            <person name="Ogihara Y."/>
            <person name="Terachi T."/>
            <person name="Sasakuma T."/>
        </authorList>
    </citation>
    <scope>NUCLEOTIDE SEQUENCE [GENOMIC DNA]</scope>
    <source>
        <strain>cv. Typica</strain>
        <tissue>Seedling</tissue>
    </source>
</reference>
<accession>P25414</accession>
<sequence length="421" mass="46959">AVAAESSTGTWTTVWTDGLTSLDRYKGRCYHIEPVAGEDNQWICYVAYPLDLFEEGSVTNMFTSIVGNVFGFKALRALRLEDLRIPPTYSKTFQGPPHGIQVERDKLNKYGRPLLGCTIKPKLGLSAKNYGRACYECLRGGLDFTKDDENVNSQPFMRWRDRFVFCAEAIYKSQAETGEIKGHYLNATAGTCEEMIKRAVFARELGVPIVMHDYLTGGFTANTTLRHYCRDNGLLLHIHRAMHAVIDRQKNHGMHFRVLAKALRMSGGDHIHSGTVVGKLEGEREMTLGFVDLLRDDFIEKDRARGIFFTQDWVSMPGVIPVASGGIHVWHMPALTEIFGDDSVLQFGGGTLGHPWGNAPGQAANRVALEACVQARNEGRDLAREGNEIIRAACKWSPELAAACEVWKAIKFEFEPVDTID</sequence>
<name>RBL_AEGTA</name>
<feature type="chain" id="PRO_0000062344" description="Ribulose bisphosphate carboxylase large chain">
    <location>
        <begin position="1" status="less than"/>
        <end position="421"/>
    </location>
</feature>
<feature type="active site" description="Proton acceptor" evidence="1">
    <location>
        <position position="120"/>
    </location>
</feature>
<feature type="active site" description="Proton acceptor" evidence="1">
    <location>
        <position position="239"/>
    </location>
</feature>
<feature type="binding site" description="in homodimeric partner" evidence="1">
    <location>
        <position position="68"/>
    </location>
    <ligand>
        <name>substrate</name>
    </ligand>
</feature>
<feature type="binding site" evidence="1">
    <location>
        <position position="118"/>
    </location>
    <ligand>
        <name>substrate</name>
    </ligand>
</feature>
<feature type="binding site" evidence="1">
    <location>
        <position position="122"/>
    </location>
    <ligand>
        <name>substrate</name>
    </ligand>
</feature>
<feature type="binding site" description="via carbamate group" evidence="2">
    <location>
        <position position="146"/>
    </location>
    <ligand>
        <name>Mg(2+)</name>
        <dbReference type="ChEBI" id="CHEBI:18420"/>
    </ligand>
</feature>
<feature type="binding site" evidence="2">
    <location>
        <position position="148"/>
    </location>
    <ligand>
        <name>Mg(2+)</name>
        <dbReference type="ChEBI" id="CHEBI:18420"/>
    </ligand>
</feature>
<feature type="binding site" evidence="2">
    <location>
        <position position="149"/>
    </location>
    <ligand>
        <name>Mg(2+)</name>
        <dbReference type="ChEBI" id="CHEBI:18420"/>
    </ligand>
</feature>
<feature type="binding site" evidence="1">
    <location>
        <position position="240"/>
    </location>
    <ligand>
        <name>substrate</name>
    </ligand>
</feature>
<feature type="binding site" evidence="1">
    <location>
        <position position="272"/>
    </location>
    <ligand>
        <name>substrate</name>
    </ligand>
</feature>
<feature type="binding site" evidence="1">
    <location>
        <position position="324"/>
    </location>
    <ligand>
        <name>substrate</name>
    </ligand>
</feature>
<feature type="site" description="Transition state stabilizer" evidence="1">
    <location>
        <position position="279"/>
    </location>
</feature>
<feature type="modified residue" description="N6-carboxylysine" evidence="2">
    <location>
        <position position="146"/>
    </location>
</feature>
<feature type="disulfide bond" description="Interchain; in linked form" evidence="1">
    <location>
        <position position="192"/>
    </location>
</feature>
<feature type="non-terminal residue">
    <location>
        <position position="1"/>
    </location>
</feature>
<dbReference type="EC" id="4.1.1.39"/>
<dbReference type="EMBL" id="X62119">
    <property type="protein sequence ID" value="CAA44038.1"/>
    <property type="molecule type" value="Genomic_DNA"/>
</dbReference>
<dbReference type="PIR" id="S17319">
    <property type="entry name" value="RKOALG"/>
</dbReference>
<dbReference type="SMR" id="P25414"/>
<dbReference type="GO" id="GO:0009507">
    <property type="term" value="C:chloroplast"/>
    <property type="evidence" value="ECO:0007669"/>
    <property type="project" value="UniProtKB-SubCell"/>
</dbReference>
<dbReference type="GO" id="GO:0000287">
    <property type="term" value="F:magnesium ion binding"/>
    <property type="evidence" value="ECO:0007669"/>
    <property type="project" value="InterPro"/>
</dbReference>
<dbReference type="GO" id="GO:0004497">
    <property type="term" value="F:monooxygenase activity"/>
    <property type="evidence" value="ECO:0007669"/>
    <property type="project" value="UniProtKB-KW"/>
</dbReference>
<dbReference type="GO" id="GO:0016984">
    <property type="term" value="F:ribulose-bisphosphate carboxylase activity"/>
    <property type="evidence" value="ECO:0007669"/>
    <property type="project" value="UniProtKB-EC"/>
</dbReference>
<dbReference type="GO" id="GO:0009853">
    <property type="term" value="P:photorespiration"/>
    <property type="evidence" value="ECO:0007669"/>
    <property type="project" value="UniProtKB-KW"/>
</dbReference>
<dbReference type="GO" id="GO:0019253">
    <property type="term" value="P:reductive pentose-phosphate cycle"/>
    <property type="evidence" value="ECO:0007669"/>
    <property type="project" value="UniProtKB-KW"/>
</dbReference>
<dbReference type="CDD" id="cd08212">
    <property type="entry name" value="RuBisCO_large_I"/>
    <property type="match status" value="1"/>
</dbReference>
<dbReference type="FunFam" id="3.20.20.110:FF:000001">
    <property type="entry name" value="Ribulose bisphosphate carboxylase large chain"/>
    <property type="match status" value="1"/>
</dbReference>
<dbReference type="Gene3D" id="3.20.20.110">
    <property type="entry name" value="Ribulose bisphosphate carboxylase, large subunit, C-terminal domain"/>
    <property type="match status" value="1"/>
</dbReference>
<dbReference type="Gene3D" id="3.30.70.150">
    <property type="entry name" value="RuBisCO large subunit, N-terminal domain"/>
    <property type="match status" value="1"/>
</dbReference>
<dbReference type="InterPro" id="IPR033966">
    <property type="entry name" value="RuBisCO"/>
</dbReference>
<dbReference type="InterPro" id="IPR020878">
    <property type="entry name" value="RuBisCo_large_chain_AS"/>
</dbReference>
<dbReference type="InterPro" id="IPR000685">
    <property type="entry name" value="RuBisCO_lsu_C"/>
</dbReference>
<dbReference type="InterPro" id="IPR036376">
    <property type="entry name" value="RuBisCO_lsu_C_sf"/>
</dbReference>
<dbReference type="InterPro" id="IPR017443">
    <property type="entry name" value="RuBisCO_lsu_fd_N"/>
</dbReference>
<dbReference type="InterPro" id="IPR036422">
    <property type="entry name" value="RuBisCO_lsu_N_sf"/>
</dbReference>
<dbReference type="InterPro" id="IPR020888">
    <property type="entry name" value="RuBisCO_lsuI"/>
</dbReference>
<dbReference type="NCBIfam" id="NF003252">
    <property type="entry name" value="PRK04208.1"/>
    <property type="match status" value="1"/>
</dbReference>
<dbReference type="PANTHER" id="PTHR42704">
    <property type="entry name" value="RIBULOSE BISPHOSPHATE CARBOXYLASE"/>
    <property type="match status" value="1"/>
</dbReference>
<dbReference type="PANTHER" id="PTHR42704:SF15">
    <property type="entry name" value="RIBULOSE BISPHOSPHATE CARBOXYLASE LARGE CHAIN"/>
    <property type="match status" value="1"/>
</dbReference>
<dbReference type="Pfam" id="PF00016">
    <property type="entry name" value="RuBisCO_large"/>
    <property type="match status" value="1"/>
</dbReference>
<dbReference type="Pfam" id="PF02788">
    <property type="entry name" value="RuBisCO_large_N"/>
    <property type="match status" value="1"/>
</dbReference>
<dbReference type="SFLD" id="SFLDG01052">
    <property type="entry name" value="RuBisCO"/>
    <property type="match status" value="1"/>
</dbReference>
<dbReference type="SFLD" id="SFLDS00014">
    <property type="entry name" value="RuBisCO"/>
    <property type="match status" value="1"/>
</dbReference>
<dbReference type="SFLD" id="SFLDG00301">
    <property type="entry name" value="RuBisCO-like_proteins"/>
    <property type="match status" value="1"/>
</dbReference>
<dbReference type="SUPFAM" id="SSF51649">
    <property type="entry name" value="RuBisCo, C-terminal domain"/>
    <property type="match status" value="1"/>
</dbReference>
<dbReference type="SUPFAM" id="SSF54966">
    <property type="entry name" value="RuBisCO, large subunit, small (N-terminal) domain"/>
    <property type="match status" value="1"/>
</dbReference>
<dbReference type="PROSITE" id="PS00157">
    <property type="entry name" value="RUBISCO_LARGE"/>
    <property type="match status" value="1"/>
</dbReference>
<proteinExistence type="inferred from homology"/>
<evidence type="ECO:0000250" key="1"/>
<evidence type="ECO:0000255" key="2">
    <source>
        <dbReference type="PROSITE-ProRule" id="PRU10114"/>
    </source>
</evidence>
<evidence type="ECO:0000305" key="3"/>
<gene>
    <name type="primary">rbcL</name>
</gene>
<comment type="function">
    <text evidence="1">RuBisCO catalyzes two reactions: the carboxylation of D-ribulose 1,5-bisphosphate, the primary event in carbon dioxide fixation, as well as the oxidative fragmentation of the pentose substrate in the photorespiration process. Both reactions occur simultaneously and in competition at the same active site (By similarity).</text>
</comment>
<comment type="catalytic activity">
    <reaction>
        <text>2 (2R)-3-phosphoglycerate + 2 H(+) = D-ribulose 1,5-bisphosphate + CO2 + H2O</text>
        <dbReference type="Rhea" id="RHEA:23124"/>
        <dbReference type="ChEBI" id="CHEBI:15377"/>
        <dbReference type="ChEBI" id="CHEBI:15378"/>
        <dbReference type="ChEBI" id="CHEBI:16526"/>
        <dbReference type="ChEBI" id="CHEBI:57870"/>
        <dbReference type="ChEBI" id="CHEBI:58272"/>
        <dbReference type="EC" id="4.1.1.39"/>
    </reaction>
</comment>
<comment type="catalytic activity">
    <reaction>
        <text>D-ribulose 1,5-bisphosphate + O2 = 2-phosphoglycolate + (2R)-3-phosphoglycerate + 2 H(+)</text>
        <dbReference type="Rhea" id="RHEA:36631"/>
        <dbReference type="ChEBI" id="CHEBI:15378"/>
        <dbReference type="ChEBI" id="CHEBI:15379"/>
        <dbReference type="ChEBI" id="CHEBI:57870"/>
        <dbReference type="ChEBI" id="CHEBI:58033"/>
        <dbReference type="ChEBI" id="CHEBI:58272"/>
    </reaction>
</comment>
<comment type="cofactor">
    <cofactor evidence="1">
        <name>Mg(2+)</name>
        <dbReference type="ChEBI" id="CHEBI:18420"/>
    </cofactor>
    <text evidence="1">Binds 1 Mg(2+) ion per subunit.</text>
</comment>
<comment type="subunit">
    <text evidence="1">Heterohexadecamer of 8 large chains and 8 small chains; disulfide-linked. The disulfide link is formed within the large subunit homodimers (By similarity).</text>
</comment>
<comment type="subcellular location">
    <subcellularLocation>
        <location>Plastid</location>
        <location>Chloroplast</location>
    </subcellularLocation>
</comment>
<comment type="PTM">
    <text evidence="1">The disulfide bond which can form in the large chain dimeric partners within the hexadecamer appears to be associated with oxidative stress and protein turnover.</text>
</comment>
<comment type="miscellaneous">
    <text evidence="1">The basic functional RuBisCO is composed of a large chain homodimer in a 'head-to-tail' conformation. In form I RuBisCO this homodimer is arranged in a barrel-like tetramer with the small subunits forming a tetrameric 'cap' on each end of the 'barrel' (By similarity).</text>
</comment>
<comment type="similarity">
    <text evidence="3">Belongs to the RuBisCO large chain family. Type I subfamily.</text>
</comment>
<protein>
    <recommendedName>
        <fullName>Ribulose bisphosphate carboxylase large chain</fullName>
        <shortName>RuBisCO large subunit</shortName>
        <ecNumber>4.1.1.39</ecNumber>
    </recommendedName>
</protein>
<organism>
    <name type="scientific">Aegilops tauschii</name>
    <name type="common">Tausch's goatgrass</name>
    <name type="synonym">Aegilops squarrosa</name>
    <dbReference type="NCBI Taxonomy" id="37682"/>
    <lineage>
        <taxon>Eukaryota</taxon>
        <taxon>Viridiplantae</taxon>
        <taxon>Streptophyta</taxon>
        <taxon>Embryophyta</taxon>
        <taxon>Tracheophyta</taxon>
        <taxon>Spermatophyta</taxon>
        <taxon>Magnoliopsida</taxon>
        <taxon>Liliopsida</taxon>
        <taxon>Poales</taxon>
        <taxon>Poaceae</taxon>
        <taxon>BOP clade</taxon>
        <taxon>Pooideae</taxon>
        <taxon>Triticodae</taxon>
        <taxon>Triticeae</taxon>
        <taxon>Triticinae</taxon>
        <taxon>Aegilops</taxon>
    </lineage>
</organism>
<geneLocation type="chloroplast"/>